<comment type="function">
    <text evidence="1">Allows the formation of correctly charged Gln-tRNA(Gln) through the transamidation of misacylated Glu-tRNA(Gln) in organisms which lack glutaminyl-tRNA synthetase. The reaction takes place in the presence of glutamine and ATP through an activated gamma-phospho-Glu-tRNA(Gln).</text>
</comment>
<comment type="catalytic activity">
    <reaction evidence="1">
        <text>L-glutamyl-tRNA(Gln) + L-glutamine + ATP + H2O = L-glutaminyl-tRNA(Gln) + L-glutamate + ADP + phosphate + H(+)</text>
        <dbReference type="Rhea" id="RHEA:17521"/>
        <dbReference type="Rhea" id="RHEA-COMP:9681"/>
        <dbReference type="Rhea" id="RHEA-COMP:9684"/>
        <dbReference type="ChEBI" id="CHEBI:15377"/>
        <dbReference type="ChEBI" id="CHEBI:15378"/>
        <dbReference type="ChEBI" id="CHEBI:29985"/>
        <dbReference type="ChEBI" id="CHEBI:30616"/>
        <dbReference type="ChEBI" id="CHEBI:43474"/>
        <dbReference type="ChEBI" id="CHEBI:58359"/>
        <dbReference type="ChEBI" id="CHEBI:78520"/>
        <dbReference type="ChEBI" id="CHEBI:78521"/>
        <dbReference type="ChEBI" id="CHEBI:456216"/>
        <dbReference type="EC" id="6.3.5.7"/>
    </reaction>
</comment>
<comment type="subunit">
    <text evidence="1">Heterotrimer of A, B and C subunits.</text>
</comment>
<comment type="similarity">
    <text evidence="1">Belongs to the amidase family. GatA subfamily.</text>
</comment>
<name>GATA_CERS4</name>
<gene>
    <name evidence="1" type="primary">gatA</name>
    <name type="ordered locus">RHOS4_08570</name>
    <name type="ORF">RSP_2270</name>
</gene>
<feature type="chain" id="PRO_0000241147" description="Glutamyl-tRNA(Gln) amidotransferase subunit A">
    <location>
        <begin position="1"/>
        <end position="491"/>
    </location>
</feature>
<feature type="active site" description="Charge relay system" evidence="1">
    <location>
        <position position="76"/>
    </location>
</feature>
<feature type="active site" description="Charge relay system" evidence="1">
    <location>
        <position position="154"/>
    </location>
</feature>
<feature type="active site" description="Acyl-ester intermediate" evidence="1">
    <location>
        <position position="178"/>
    </location>
</feature>
<reference key="1">
    <citation type="submission" date="2005-09" db="EMBL/GenBank/DDBJ databases">
        <title>Complete sequence of chromosome 1 of Rhodobacter sphaeroides 2.4.1.</title>
        <authorList>
            <person name="Copeland A."/>
            <person name="Lucas S."/>
            <person name="Lapidus A."/>
            <person name="Barry K."/>
            <person name="Detter J.C."/>
            <person name="Glavina T."/>
            <person name="Hammon N."/>
            <person name="Israni S."/>
            <person name="Pitluck S."/>
            <person name="Richardson P."/>
            <person name="Mackenzie C."/>
            <person name="Choudhary M."/>
            <person name="Larimer F."/>
            <person name="Hauser L.J."/>
            <person name="Land M."/>
            <person name="Donohue T.J."/>
            <person name="Kaplan S."/>
        </authorList>
    </citation>
    <scope>NUCLEOTIDE SEQUENCE [LARGE SCALE GENOMIC DNA]</scope>
    <source>
        <strain>ATCC 17023 / DSM 158 / JCM 6121 / CCUG 31486 / LMG 2827 / NBRC 12203 / NCIMB 8253 / ATH 2.4.1.</strain>
    </source>
</reference>
<keyword id="KW-0067">ATP-binding</keyword>
<keyword id="KW-0436">Ligase</keyword>
<keyword id="KW-0547">Nucleotide-binding</keyword>
<keyword id="KW-0648">Protein biosynthesis</keyword>
<keyword id="KW-1185">Reference proteome</keyword>
<protein>
    <recommendedName>
        <fullName evidence="1">Glutamyl-tRNA(Gln) amidotransferase subunit A</fullName>
        <shortName evidence="1">Glu-ADT subunit A</shortName>
        <ecNumber evidence="1">6.3.5.7</ecNumber>
    </recommendedName>
</protein>
<proteinExistence type="inferred from homology"/>
<evidence type="ECO:0000255" key="1">
    <source>
        <dbReference type="HAMAP-Rule" id="MF_00120"/>
    </source>
</evidence>
<organism>
    <name type="scientific">Cereibacter sphaeroides (strain ATCC 17023 / DSM 158 / JCM 6121 / CCUG 31486 / LMG 2827 / NBRC 12203 / NCIMB 8253 / ATH 2.4.1.)</name>
    <name type="common">Rhodobacter sphaeroides</name>
    <dbReference type="NCBI Taxonomy" id="272943"/>
    <lineage>
        <taxon>Bacteria</taxon>
        <taxon>Pseudomonadati</taxon>
        <taxon>Pseudomonadota</taxon>
        <taxon>Alphaproteobacteria</taxon>
        <taxon>Rhodobacterales</taxon>
        <taxon>Paracoccaceae</taxon>
        <taxon>Cereibacter</taxon>
    </lineage>
</organism>
<dbReference type="EC" id="6.3.5.7" evidence="1"/>
<dbReference type="EMBL" id="CP000143">
    <property type="protein sequence ID" value="ABA78425.1"/>
    <property type="molecule type" value="Genomic_DNA"/>
</dbReference>
<dbReference type="RefSeq" id="WP_011337367.1">
    <property type="nucleotide sequence ID" value="NC_007493.2"/>
</dbReference>
<dbReference type="RefSeq" id="YP_352326.1">
    <property type="nucleotide sequence ID" value="NC_007493.2"/>
</dbReference>
<dbReference type="SMR" id="Q3J459"/>
<dbReference type="STRING" id="272943.RSP_2270"/>
<dbReference type="EnsemblBacteria" id="ABA78425">
    <property type="protein sequence ID" value="ABA78425"/>
    <property type="gene ID" value="RSP_2270"/>
</dbReference>
<dbReference type="GeneID" id="3719800"/>
<dbReference type="KEGG" id="rsp:RSP_2270"/>
<dbReference type="PATRIC" id="fig|272943.9.peg.1175"/>
<dbReference type="eggNOG" id="COG0154">
    <property type="taxonomic scope" value="Bacteria"/>
</dbReference>
<dbReference type="OrthoDB" id="9811471at2"/>
<dbReference type="PhylomeDB" id="Q3J459"/>
<dbReference type="Proteomes" id="UP000002703">
    <property type="component" value="Chromosome 1"/>
</dbReference>
<dbReference type="GO" id="GO:0030956">
    <property type="term" value="C:glutamyl-tRNA(Gln) amidotransferase complex"/>
    <property type="evidence" value="ECO:0007669"/>
    <property type="project" value="InterPro"/>
</dbReference>
<dbReference type="GO" id="GO:0005524">
    <property type="term" value="F:ATP binding"/>
    <property type="evidence" value="ECO:0007669"/>
    <property type="project" value="UniProtKB-KW"/>
</dbReference>
<dbReference type="GO" id="GO:0050567">
    <property type="term" value="F:glutaminyl-tRNA synthase (glutamine-hydrolyzing) activity"/>
    <property type="evidence" value="ECO:0007669"/>
    <property type="project" value="UniProtKB-UniRule"/>
</dbReference>
<dbReference type="GO" id="GO:0006412">
    <property type="term" value="P:translation"/>
    <property type="evidence" value="ECO:0007669"/>
    <property type="project" value="UniProtKB-UniRule"/>
</dbReference>
<dbReference type="Gene3D" id="3.90.1300.10">
    <property type="entry name" value="Amidase signature (AS) domain"/>
    <property type="match status" value="1"/>
</dbReference>
<dbReference type="HAMAP" id="MF_00120">
    <property type="entry name" value="GatA"/>
    <property type="match status" value="1"/>
</dbReference>
<dbReference type="InterPro" id="IPR000120">
    <property type="entry name" value="Amidase"/>
</dbReference>
<dbReference type="InterPro" id="IPR020556">
    <property type="entry name" value="Amidase_CS"/>
</dbReference>
<dbReference type="InterPro" id="IPR023631">
    <property type="entry name" value="Amidase_dom"/>
</dbReference>
<dbReference type="InterPro" id="IPR036928">
    <property type="entry name" value="AS_sf"/>
</dbReference>
<dbReference type="InterPro" id="IPR004412">
    <property type="entry name" value="GatA"/>
</dbReference>
<dbReference type="NCBIfam" id="TIGR00132">
    <property type="entry name" value="gatA"/>
    <property type="match status" value="1"/>
</dbReference>
<dbReference type="PANTHER" id="PTHR11895:SF151">
    <property type="entry name" value="GLUTAMYL-TRNA(GLN) AMIDOTRANSFERASE SUBUNIT A"/>
    <property type="match status" value="1"/>
</dbReference>
<dbReference type="PANTHER" id="PTHR11895">
    <property type="entry name" value="TRANSAMIDASE"/>
    <property type="match status" value="1"/>
</dbReference>
<dbReference type="Pfam" id="PF01425">
    <property type="entry name" value="Amidase"/>
    <property type="match status" value="1"/>
</dbReference>
<dbReference type="SUPFAM" id="SSF75304">
    <property type="entry name" value="Amidase signature (AS) enzymes"/>
    <property type="match status" value="1"/>
</dbReference>
<dbReference type="PROSITE" id="PS00571">
    <property type="entry name" value="AMIDASES"/>
    <property type="match status" value="1"/>
</dbReference>
<accession>Q3J459</accession>
<sequence>MNANELTIADARDALAKGELSAVDLTMACLTAIDAGTPLNAFVHATPEIALDQARAADARRGAGAGALNGIPLGIKDLFCTRGVASQAASNILKGFKPEYESTVTSKLFEAGAVMLGKLNMDEFAMGSSNETSCYGDAVNPWKVDDRRLTPGGSSGGSAAAVAADLCLAATGTDTGGSIRQPAAFTGIVGIKPTYGRVSRWGIVAFASSLDQAGPMTKSVRDAAILLGAMAGHDPKDSTSADIPVPDFEAALTGDIRGRKIGIPREYRMEGMPAEIEALWARGREMLADAGAEIVDISLPHTKYALPAYYVIAPAEASSNLARYDGVRYGHRARLGQGDGIVDMYEKTRAEGFGKEVQRRVMIGTYVLSAGFYDAYYNRARKVRALIKRDFDEAFAAGVDAILTPATPSSAFGLGEMADADPVAMYLNDVFTVTVNLAGLPGISVPVGLDAKGLPLGLQLIGRPWDEAGLLNHAHVLERAAGFVEKPRKWW</sequence>